<sequence>MENNNLGLRFRKLPRQPLALPKLDPLLDENLEQWPHLNQLVQCYGTEWVKDVNKYGHYENIRPDSFQTQIFEGPDTDTETEIRLASARSATIEEDVASISGRPFSDPGSSKHFGQPPLPAYEPAFDWENERAMIFGQRTPESPAASYSSGLKISVRVLSLAFQSGLVEPFFGSIALYNQERKEKLSEDFYFQIQPTEMQDAKLSSENRGVFYLDAPSASVCLLIQLEKTATEEGGVTSSVYSRKEPVHLTEREKQKLQVWSRIMPYRESFAWAVVPLFDNNLTTNTGESASPSSPLAPSMTASSSHDGVYEPIAKITSDGKQGYSGGSSVVVEISNLNKVKESYSEESIQDPKRKVHKPVKGVLRLEIEKHRNGHGDFEDLSENGSIINDSLDPTDRLSDLTLMKCPSSSSGGPRNGCSKWNSEDAKDVSRNLTSSCGTPDLNCYHAFDFCSTTRNEPFLHLFHCLYVYPVAVTLSRKRNPFIRVELRKDDTDIRKQPLEAIYPREPGVSLQKWVHTQVAVGARAASYHDEIKVSLPATWTPSHHLLFTFFHVDLQTKLEAPRPVVVGYASLPLSTYIHSRSDISLPVMRELVPHYLQESTKERLDYLEDGKNIFKLRLRLCSSLYPTNERVRDFCLEYDRHTLQTRPPWGSELLQAINSLKHVDSTALLQFLYPILNMLLHLIGNGGETLQVAAFRAMVDILTRVQQVSFDDADRNRFLVTYVDYSFDDFGGNQPPVYPGLATVWGSLARSKAKGYRVGPVYDDVLSMAWFFLELIVKSMALEQARLYDHNLPTGEDVPPMQLKESVFRCIMQLFDCLLTEVHERCKKGLSLAKRLNSSLAFFCYDLLYIIEPCQVYELVSLYMDKFSGVCQSVLHECKLTFLQIISDHDLFVEMPGRDPSDRNYLSSILIQELFLSLDHDELPLRAKGARILVILLCKHEFDARYQKAEDKLYIAQLYFPFVGQILDEMPVFYNLNATEKREVLIGVLQIVRNLDDTSLVKAWQQSIARTRLYFKLMEECLILFEHKKAADSILGGNNSRGPVSEGAGSPKYSERLSPAINNYLSEASRQEVRLEGTPDNGYLWQRVNSQLASPSQPYSLREALAQAQSSRIGASAQALRESLHPILRQKLELWEENVSATVSLQVLEITENFSSMAASHNIATDYGKLDCITTILTSFFSRNQSLAFWKAFFPIFNRIFDLHGATLMARENDRFLKQIAFHLLRLAVYRNDSVRKRAVIGLQILVKSSLYFMQTARLRALLTITLSELMSDVQVTHMKSDNTLEESGEARRLQQSLSEMADEAKSVNLLRECGLPDDTLLIIPEKFTENRWSWAEVKHLSDSLVLALDASLGHALLGSVMAMDRYAAAESFYKLGMAFAPVPDLHIMWLLHLCDAHQEMQSWAEAAQCAVAVAGVIMQALVARNDGVWSKDHVSALRKICPMVSGEFTTEASAAEVEGYGASKLTVDSAVKYLQLANKLFSQAELYHFCASILELVIPVYKSRKAYGQLAKCHTLLTNIYESILDQESNPIPFIDATYYRVGFYGEKFGKLDRKEYVYREPRDVRLGDIMEKLSHIYESRMDSNHILHIIPDSRQVKAEDLQAGVCYLQITAVDAVMEDEDLGSRRERIFSLSTGSVRARVFDRFLFDTPFTKNGKTQGGLEDQWKRRTVLQTEGSFPALVNRLLVTKSESLEFSPVENAIGMIETRTTALRNELEEPRSSDGDHLPRLQSLQRILQGSVAVQVNSGVLSVCTAFLSGEPATRLRSQELQQLIAALLEFMAVCKRAIRVHFRLIGEEDQEFHTQLVNGFQSLTAELSHYIPAILSEL</sequence>
<gene>
    <name evidence="12" type="primary">SPK1</name>
    <name evidence="14" type="ordered locus">At4g16340</name>
    <name evidence="16" type="ORF">dl4200c</name>
    <name evidence="17" type="ORF">FCAALL.346</name>
</gene>
<dbReference type="EMBL" id="AF465831">
    <property type="protein sequence ID" value="AAL74193.1"/>
    <property type="molecule type" value="mRNA"/>
</dbReference>
<dbReference type="EMBL" id="Z97340">
    <property type="protein sequence ID" value="CAB10411.1"/>
    <property type="status" value="ALT_SEQ"/>
    <property type="molecule type" value="Genomic_DNA"/>
</dbReference>
<dbReference type="EMBL" id="AL161543">
    <property type="protein sequence ID" value="CAB78676.1"/>
    <property type="status" value="ALT_SEQ"/>
    <property type="molecule type" value="Genomic_DNA"/>
</dbReference>
<dbReference type="EMBL" id="CP002687">
    <property type="protein sequence ID" value="AEE83733.1"/>
    <property type="molecule type" value="Genomic_DNA"/>
</dbReference>
<dbReference type="EMBL" id="CP002687">
    <property type="protein sequence ID" value="ANM68002.1"/>
    <property type="molecule type" value="Genomic_DNA"/>
</dbReference>
<dbReference type="EMBL" id="DQ649023">
    <property type="protein sequence ID" value="ABG35746.1"/>
    <property type="molecule type" value="Genomic_DNA"/>
</dbReference>
<dbReference type="PIR" id="A71430">
    <property type="entry name" value="A71430"/>
</dbReference>
<dbReference type="RefSeq" id="NP_001319958.1">
    <property type="nucleotide sequence ID" value="NM_001341097.1"/>
</dbReference>
<dbReference type="RefSeq" id="NP_193367.7">
    <property type="nucleotide sequence ID" value="NM_117729.8"/>
</dbReference>
<dbReference type="SMR" id="Q8SAB7"/>
<dbReference type="DIP" id="DIP-29817N"/>
<dbReference type="FunCoup" id="Q8SAB7">
    <property type="interactions" value="2638"/>
</dbReference>
<dbReference type="IntAct" id="Q8SAB7">
    <property type="interactions" value="17"/>
</dbReference>
<dbReference type="STRING" id="3702.Q8SAB7"/>
<dbReference type="iPTMnet" id="Q8SAB7"/>
<dbReference type="PaxDb" id="3702-AT4G16340.1"/>
<dbReference type="ProteomicsDB" id="226778"/>
<dbReference type="EnsemblPlants" id="AT4G16340.1">
    <property type="protein sequence ID" value="AT4G16340.1"/>
    <property type="gene ID" value="AT4G16340"/>
</dbReference>
<dbReference type="EnsemblPlants" id="AT4G16340.2">
    <property type="protein sequence ID" value="AT4G16340.2"/>
    <property type="gene ID" value="AT4G16340"/>
</dbReference>
<dbReference type="GeneID" id="827328"/>
<dbReference type="Gramene" id="AT4G16340.1">
    <property type="protein sequence ID" value="AT4G16340.1"/>
    <property type="gene ID" value="AT4G16340"/>
</dbReference>
<dbReference type="Gramene" id="AT4G16340.2">
    <property type="protein sequence ID" value="AT4G16340.2"/>
    <property type="gene ID" value="AT4G16340"/>
</dbReference>
<dbReference type="KEGG" id="ath:AT4G16340"/>
<dbReference type="Araport" id="AT4G16340"/>
<dbReference type="TAIR" id="AT4G16340">
    <property type="gene designation" value="SPK1"/>
</dbReference>
<dbReference type="eggNOG" id="KOG1997">
    <property type="taxonomic scope" value="Eukaryota"/>
</dbReference>
<dbReference type="HOGENOM" id="CLU_237262_0_0_1"/>
<dbReference type="InParanoid" id="Q8SAB7"/>
<dbReference type="OMA" id="FPHQFND"/>
<dbReference type="PhylomeDB" id="Q8SAB7"/>
<dbReference type="PRO" id="PR:Q8SAB7"/>
<dbReference type="Proteomes" id="UP000006548">
    <property type="component" value="Chromosome 4"/>
</dbReference>
<dbReference type="ExpressionAtlas" id="Q8SAB7">
    <property type="expression patterns" value="baseline and differential"/>
</dbReference>
<dbReference type="GO" id="GO:0070971">
    <property type="term" value="C:endoplasmic reticulum exit site"/>
    <property type="evidence" value="ECO:0000314"/>
    <property type="project" value="TAIR"/>
</dbReference>
<dbReference type="GO" id="GO:0005789">
    <property type="term" value="C:endoplasmic reticulum membrane"/>
    <property type="evidence" value="ECO:0007669"/>
    <property type="project" value="UniProtKB-SubCell"/>
</dbReference>
<dbReference type="GO" id="GO:0019898">
    <property type="term" value="C:extrinsic component of membrane"/>
    <property type="evidence" value="ECO:0000314"/>
    <property type="project" value="TAIR"/>
</dbReference>
<dbReference type="GO" id="GO:0005634">
    <property type="term" value="C:nucleus"/>
    <property type="evidence" value="ECO:0000314"/>
    <property type="project" value="TAIR"/>
</dbReference>
<dbReference type="GO" id="GO:0005085">
    <property type="term" value="F:guanyl-nucleotide exchange factor activity"/>
    <property type="evidence" value="ECO:0000314"/>
    <property type="project" value="UniProtKB"/>
</dbReference>
<dbReference type="GO" id="GO:0051211">
    <property type="term" value="P:anisotropic cell growth"/>
    <property type="evidence" value="ECO:0000315"/>
    <property type="project" value="UniProtKB"/>
</dbReference>
<dbReference type="GO" id="GO:0009734">
    <property type="term" value="P:auxin-activated signaling pathway"/>
    <property type="evidence" value="ECO:0007669"/>
    <property type="project" value="UniProtKB-KW"/>
</dbReference>
<dbReference type="GO" id="GO:0043622">
    <property type="term" value="P:cortical microtubule organization"/>
    <property type="evidence" value="ECO:0000315"/>
    <property type="project" value="UniProtKB"/>
</dbReference>
<dbReference type="GO" id="GO:0048446">
    <property type="term" value="P:petal morphogenesis"/>
    <property type="evidence" value="ECO:0000315"/>
    <property type="project" value="UniProtKB"/>
</dbReference>
<dbReference type="GO" id="GO:0009958">
    <property type="term" value="P:positive gravitropism"/>
    <property type="evidence" value="ECO:0000315"/>
    <property type="project" value="UniProtKB"/>
</dbReference>
<dbReference type="GO" id="GO:0008064">
    <property type="term" value="P:regulation of actin polymerization or depolymerization"/>
    <property type="evidence" value="ECO:0000315"/>
    <property type="project" value="UniProtKB"/>
</dbReference>
<dbReference type="GO" id="GO:0010928">
    <property type="term" value="P:regulation of auxin mediated signaling pathway"/>
    <property type="evidence" value="ECO:0000315"/>
    <property type="project" value="UniProtKB"/>
</dbReference>
<dbReference type="GO" id="GO:0008360">
    <property type="term" value="P:regulation of cell shape"/>
    <property type="evidence" value="ECO:0000315"/>
    <property type="project" value="UniProtKB"/>
</dbReference>
<dbReference type="GO" id="GO:0051493">
    <property type="term" value="P:regulation of cytoskeleton organization"/>
    <property type="evidence" value="ECO:0000315"/>
    <property type="project" value="UniProtKB"/>
</dbReference>
<dbReference type="GO" id="GO:0007264">
    <property type="term" value="P:small GTPase-mediated signal transduction"/>
    <property type="evidence" value="ECO:0007669"/>
    <property type="project" value="InterPro"/>
</dbReference>
<dbReference type="GO" id="GO:0016192">
    <property type="term" value="P:vesicle-mediated transport"/>
    <property type="evidence" value="ECO:0000315"/>
    <property type="project" value="TAIR"/>
</dbReference>
<dbReference type="CDD" id="cd08679">
    <property type="entry name" value="C2_DOCK180_related"/>
    <property type="match status" value="1"/>
</dbReference>
<dbReference type="CDD" id="cd11684">
    <property type="entry name" value="DHR2_DOCK"/>
    <property type="match status" value="1"/>
</dbReference>
<dbReference type="FunFam" id="1.20.58.740:FF:000005">
    <property type="entry name" value="Guanine nucleotide exchange factor SPIKE 1"/>
    <property type="match status" value="1"/>
</dbReference>
<dbReference type="FunFam" id="2.60.40.150:FF:000293">
    <property type="entry name" value="Guanine nucleotide exchange factor SPIKE 1"/>
    <property type="match status" value="1"/>
</dbReference>
<dbReference type="Gene3D" id="1.20.58.740">
    <property type="match status" value="1"/>
</dbReference>
<dbReference type="Gene3D" id="1.25.40.410">
    <property type="match status" value="1"/>
</dbReference>
<dbReference type="Gene3D" id="2.60.40.150">
    <property type="entry name" value="C2 domain"/>
    <property type="match status" value="1"/>
</dbReference>
<dbReference type="InterPro" id="IPR027007">
    <property type="entry name" value="C2_DOCK-type_domain"/>
</dbReference>
<dbReference type="InterPro" id="IPR035892">
    <property type="entry name" value="C2_domain_sf"/>
</dbReference>
<dbReference type="InterPro" id="IPR026791">
    <property type="entry name" value="DOCK"/>
</dbReference>
<dbReference type="InterPro" id="IPR043161">
    <property type="entry name" value="DOCK_C_lobe_A"/>
</dbReference>
<dbReference type="InterPro" id="IPR043162">
    <property type="entry name" value="DOCK_C_lobe_C"/>
</dbReference>
<dbReference type="InterPro" id="IPR027357">
    <property type="entry name" value="DOCKER_dom"/>
</dbReference>
<dbReference type="InterPro" id="IPR046769">
    <property type="entry name" value="DOCKER_Lobe_A"/>
</dbReference>
<dbReference type="InterPro" id="IPR046770">
    <property type="entry name" value="DOCKER_Lobe_B"/>
</dbReference>
<dbReference type="InterPro" id="IPR046773">
    <property type="entry name" value="DOCKER_Lobe_C"/>
</dbReference>
<dbReference type="PANTHER" id="PTHR23317">
    <property type="entry name" value="DEDICATOR OF CYTOKINESIS DOCK"/>
    <property type="match status" value="1"/>
</dbReference>
<dbReference type="PANTHER" id="PTHR23317:SF76">
    <property type="entry name" value="LD20667P"/>
    <property type="match status" value="1"/>
</dbReference>
<dbReference type="Pfam" id="PF06920">
    <property type="entry name" value="DHR-2_Lobe_A"/>
    <property type="match status" value="1"/>
</dbReference>
<dbReference type="Pfam" id="PF20422">
    <property type="entry name" value="DHR-2_Lobe_B"/>
    <property type="match status" value="1"/>
</dbReference>
<dbReference type="Pfam" id="PF20421">
    <property type="entry name" value="DHR-2_Lobe_C"/>
    <property type="match status" value="1"/>
</dbReference>
<dbReference type="Pfam" id="PF14429">
    <property type="entry name" value="DOCK-C2"/>
    <property type="match status" value="1"/>
</dbReference>
<dbReference type="PROSITE" id="PS51650">
    <property type="entry name" value="C2_DOCK"/>
    <property type="match status" value="1"/>
</dbReference>
<dbReference type="PROSITE" id="PS51651">
    <property type="entry name" value="DOCKER"/>
    <property type="match status" value="1"/>
</dbReference>
<proteinExistence type="evidence at protein level"/>
<organism evidence="15">
    <name type="scientific">Arabidopsis thaliana</name>
    <name type="common">Mouse-ear cress</name>
    <dbReference type="NCBI Taxonomy" id="3702"/>
    <lineage>
        <taxon>Eukaryota</taxon>
        <taxon>Viridiplantae</taxon>
        <taxon>Streptophyta</taxon>
        <taxon>Embryophyta</taxon>
        <taxon>Tracheophyta</taxon>
        <taxon>Spermatophyta</taxon>
        <taxon>Magnoliopsida</taxon>
        <taxon>eudicotyledons</taxon>
        <taxon>Gunneridae</taxon>
        <taxon>Pentapetalae</taxon>
        <taxon>rosids</taxon>
        <taxon>malvids</taxon>
        <taxon>Brassicales</taxon>
        <taxon>Brassicaceae</taxon>
        <taxon>Camelineae</taxon>
        <taxon>Arabidopsis</taxon>
    </lineage>
</organism>
<name>SPK1_ARATH</name>
<protein>
    <recommendedName>
        <fullName evidence="12">Guanine nucleotide exchange factor SPIKE 1</fullName>
    </recommendedName>
</protein>
<reference key="1">
    <citation type="journal article" date="2002" name="Plant Cell">
        <title>The Arabidopsis SPIKE1 gene is required for normal cell shape control and tissue development.</title>
        <authorList>
            <person name="Qiu J.-L."/>
            <person name="Jilk R."/>
            <person name="Marks M.D."/>
            <person name="Szymanski D.B."/>
        </authorList>
    </citation>
    <scope>NUCLEOTIDE SEQUENCE [MRNA]</scope>
    <scope>FUNCTION</scope>
    <scope>DISRUPTION PHENOTYPE</scope>
    <scope>TISSUE SPECIFICITY</scope>
    <source>
        <strain>cv. Columbia</strain>
    </source>
</reference>
<reference key="2">
    <citation type="journal article" date="1998" name="Nature">
        <title>Analysis of 1.9 Mb of contiguous sequence from chromosome 4 of Arabidopsis thaliana.</title>
        <authorList>
            <person name="Bevan M."/>
            <person name="Bancroft I."/>
            <person name="Bent E."/>
            <person name="Love K."/>
            <person name="Goodman H.M."/>
            <person name="Dean C."/>
            <person name="Bergkamp R."/>
            <person name="Dirkse W."/>
            <person name="van Staveren M."/>
            <person name="Stiekema W."/>
            <person name="Drost L."/>
            <person name="Ridley P."/>
            <person name="Hudson S.-A."/>
            <person name="Patel K."/>
            <person name="Murphy G."/>
            <person name="Piffanelli P."/>
            <person name="Wedler H."/>
            <person name="Wedler E."/>
            <person name="Wambutt R."/>
            <person name="Weitzenegger T."/>
            <person name="Pohl T."/>
            <person name="Terryn N."/>
            <person name="Gielen J."/>
            <person name="Villarroel R."/>
            <person name="De Clercq R."/>
            <person name="van Montagu M."/>
            <person name="Lecharny A."/>
            <person name="Aubourg S."/>
            <person name="Gy I."/>
            <person name="Kreis M."/>
            <person name="Lao N."/>
            <person name="Kavanagh T."/>
            <person name="Hempel S."/>
            <person name="Kotter P."/>
            <person name="Entian K.-D."/>
            <person name="Rieger M."/>
            <person name="Schaefer M."/>
            <person name="Funk B."/>
            <person name="Mueller-Auer S."/>
            <person name="Silvey M."/>
            <person name="James R."/>
            <person name="Monfort A."/>
            <person name="Pons A."/>
            <person name="Puigdomenech P."/>
            <person name="Douka A."/>
            <person name="Voukelatou E."/>
            <person name="Milioni D."/>
            <person name="Hatzopoulos P."/>
            <person name="Piravandi E."/>
            <person name="Obermaier B."/>
            <person name="Hilbert H."/>
            <person name="Duesterhoeft A."/>
            <person name="Moores T."/>
            <person name="Jones J.D.G."/>
            <person name="Eneva T."/>
            <person name="Palme K."/>
            <person name="Benes V."/>
            <person name="Rechmann S."/>
            <person name="Ansorge W."/>
            <person name="Cooke R."/>
            <person name="Berger C."/>
            <person name="Delseny M."/>
            <person name="Voet M."/>
            <person name="Volckaert G."/>
            <person name="Mewes H.-W."/>
            <person name="Klosterman S."/>
            <person name="Schueller C."/>
            <person name="Chalwatzis N."/>
        </authorList>
    </citation>
    <scope>NUCLEOTIDE SEQUENCE [LARGE SCALE GENOMIC DNA]</scope>
    <source>
        <strain>cv. Columbia</strain>
    </source>
</reference>
<reference key="3">
    <citation type="journal article" date="1999" name="Nature">
        <title>Sequence and analysis of chromosome 4 of the plant Arabidopsis thaliana.</title>
        <authorList>
            <person name="Mayer K.F.X."/>
            <person name="Schueller C."/>
            <person name="Wambutt R."/>
            <person name="Murphy G."/>
            <person name="Volckaert G."/>
            <person name="Pohl T."/>
            <person name="Duesterhoeft A."/>
            <person name="Stiekema W."/>
            <person name="Entian K.-D."/>
            <person name="Terryn N."/>
            <person name="Harris B."/>
            <person name="Ansorge W."/>
            <person name="Brandt P."/>
            <person name="Grivell L.A."/>
            <person name="Rieger M."/>
            <person name="Weichselgartner M."/>
            <person name="de Simone V."/>
            <person name="Obermaier B."/>
            <person name="Mache R."/>
            <person name="Mueller M."/>
            <person name="Kreis M."/>
            <person name="Delseny M."/>
            <person name="Puigdomenech P."/>
            <person name="Watson M."/>
            <person name="Schmidtheini T."/>
            <person name="Reichert B."/>
            <person name="Portetelle D."/>
            <person name="Perez-Alonso M."/>
            <person name="Boutry M."/>
            <person name="Bancroft I."/>
            <person name="Vos P."/>
            <person name="Hoheisel J."/>
            <person name="Zimmermann W."/>
            <person name="Wedler H."/>
            <person name="Ridley P."/>
            <person name="Langham S.-A."/>
            <person name="McCullagh B."/>
            <person name="Bilham L."/>
            <person name="Robben J."/>
            <person name="van der Schueren J."/>
            <person name="Grymonprez B."/>
            <person name="Chuang Y.-J."/>
            <person name="Vandenbussche F."/>
            <person name="Braeken M."/>
            <person name="Weltjens I."/>
            <person name="Voet M."/>
            <person name="Bastiaens I."/>
            <person name="Aert R."/>
            <person name="Defoor E."/>
            <person name="Weitzenegger T."/>
            <person name="Bothe G."/>
            <person name="Ramsperger U."/>
            <person name="Hilbert H."/>
            <person name="Braun M."/>
            <person name="Holzer E."/>
            <person name="Brandt A."/>
            <person name="Peters S."/>
            <person name="van Staveren M."/>
            <person name="Dirkse W."/>
            <person name="Mooijman P."/>
            <person name="Klein Lankhorst R."/>
            <person name="Rose M."/>
            <person name="Hauf J."/>
            <person name="Koetter P."/>
            <person name="Berneiser S."/>
            <person name="Hempel S."/>
            <person name="Feldpausch M."/>
            <person name="Lamberth S."/>
            <person name="Van den Daele H."/>
            <person name="De Keyser A."/>
            <person name="Buysshaert C."/>
            <person name="Gielen J."/>
            <person name="Villarroel R."/>
            <person name="De Clercq R."/>
            <person name="van Montagu M."/>
            <person name="Rogers J."/>
            <person name="Cronin A."/>
            <person name="Quail M.A."/>
            <person name="Bray-Allen S."/>
            <person name="Clark L."/>
            <person name="Doggett J."/>
            <person name="Hall S."/>
            <person name="Kay M."/>
            <person name="Lennard N."/>
            <person name="McLay K."/>
            <person name="Mayes R."/>
            <person name="Pettett A."/>
            <person name="Rajandream M.A."/>
            <person name="Lyne M."/>
            <person name="Benes V."/>
            <person name="Rechmann S."/>
            <person name="Borkova D."/>
            <person name="Bloecker H."/>
            <person name="Scharfe M."/>
            <person name="Grimm M."/>
            <person name="Loehnert T.-H."/>
            <person name="Dose S."/>
            <person name="de Haan M."/>
            <person name="Maarse A.C."/>
            <person name="Schaefer M."/>
            <person name="Mueller-Auer S."/>
            <person name="Gabel C."/>
            <person name="Fuchs M."/>
            <person name="Fartmann B."/>
            <person name="Granderath K."/>
            <person name="Dauner D."/>
            <person name="Herzl A."/>
            <person name="Neumann S."/>
            <person name="Argiriou A."/>
            <person name="Vitale D."/>
            <person name="Liguori R."/>
            <person name="Piravandi E."/>
            <person name="Massenet O."/>
            <person name="Quigley F."/>
            <person name="Clabauld G."/>
            <person name="Muendlein A."/>
            <person name="Felber R."/>
            <person name="Schnabl S."/>
            <person name="Hiller R."/>
            <person name="Schmidt W."/>
            <person name="Lecharny A."/>
            <person name="Aubourg S."/>
            <person name="Chefdor F."/>
            <person name="Cooke R."/>
            <person name="Berger C."/>
            <person name="Monfort A."/>
            <person name="Casacuberta E."/>
            <person name="Gibbons T."/>
            <person name="Weber N."/>
            <person name="Vandenbol M."/>
            <person name="Bargues M."/>
            <person name="Terol J."/>
            <person name="Torres A."/>
            <person name="Perez-Perez A."/>
            <person name="Purnelle B."/>
            <person name="Bent E."/>
            <person name="Johnson S."/>
            <person name="Tacon D."/>
            <person name="Jesse T."/>
            <person name="Heijnen L."/>
            <person name="Schwarz S."/>
            <person name="Scholler P."/>
            <person name="Heber S."/>
            <person name="Francs P."/>
            <person name="Bielke C."/>
            <person name="Frishman D."/>
            <person name="Haase D."/>
            <person name="Lemcke K."/>
            <person name="Mewes H.-W."/>
            <person name="Stocker S."/>
            <person name="Zaccaria P."/>
            <person name="Bevan M."/>
            <person name="Wilson R.K."/>
            <person name="de la Bastide M."/>
            <person name="Habermann K."/>
            <person name="Parnell L."/>
            <person name="Dedhia N."/>
            <person name="Gnoj L."/>
            <person name="Schutz K."/>
            <person name="Huang E."/>
            <person name="Spiegel L."/>
            <person name="Sekhon M."/>
            <person name="Murray J."/>
            <person name="Sheet P."/>
            <person name="Cordes M."/>
            <person name="Abu-Threideh J."/>
            <person name="Stoneking T."/>
            <person name="Kalicki J."/>
            <person name="Graves T."/>
            <person name="Harmon G."/>
            <person name="Edwards J."/>
            <person name="Latreille P."/>
            <person name="Courtney L."/>
            <person name="Cloud J."/>
            <person name="Abbott A."/>
            <person name="Scott K."/>
            <person name="Johnson D."/>
            <person name="Minx P."/>
            <person name="Bentley D."/>
            <person name="Fulton B."/>
            <person name="Miller N."/>
            <person name="Greco T."/>
            <person name="Kemp K."/>
            <person name="Kramer J."/>
            <person name="Fulton L."/>
            <person name="Mardis E."/>
            <person name="Dante M."/>
            <person name="Pepin K."/>
            <person name="Hillier L.W."/>
            <person name="Nelson J."/>
            <person name="Spieth J."/>
            <person name="Ryan E."/>
            <person name="Andrews S."/>
            <person name="Geisel C."/>
            <person name="Layman D."/>
            <person name="Du H."/>
            <person name="Ali J."/>
            <person name="Berghoff A."/>
            <person name="Jones K."/>
            <person name="Drone K."/>
            <person name="Cotton M."/>
            <person name="Joshu C."/>
            <person name="Antonoiu B."/>
            <person name="Zidanic M."/>
            <person name="Strong C."/>
            <person name="Sun H."/>
            <person name="Lamar B."/>
            <person name="Yordan C."/>
            <person name="Ma P."/>
            <person name="Zhong J."/>
            <person name="Preston R."/>
            <person name="Vil D."/>
            <person name="Shekher M."/>
            <person name="Matero A."/>
            <person name="Shah R."/>
            <person name="Swaby I.K."/>
            <person name="O'Shaughnessy A."/>
            <person name="Rodriguez M."/>
            <person name="Hoffman J."/>
            <person name="Till S."/>
            <person name="Granat S."/>
            <person name="Shohdy N."/>
            <person name="Hasegawa A."/>
            <person name="Hameed A."/>
            <person name="Lodhi M."/>
            <person name="Johnson A."/>
            <person name="Chen E."/>
            <person name="Marra M.A."/>
            <person name="Martienssen R."/>
            <person name="McCombie W.R."/>
        </authorList>
    </citation>
    <scope>NUCLEOTIDE SEQUENCE [LARGE SCALE GENOMIC DNA]</scope>
    <source>
        <strain>cv. Columbia</strain>
    </source>
</reference>
<reference key="4">
    <citation type="journal article" date="2017" name="Plant J.">
        <title>Araport11: a complete reannotation of the Arabidopsis thaliana reference genome.</title>
        <authorList>
            <person name="Cheng C.Y."/>
            <person name="Krishnakumar V."/>
            <person name="Chan A.P."/>
            <person name="Thibaud-Nissen F."/>
            <person name="Schobel S."/>
            <person name="Town C.D."/>
        </authorList>
    </citation>
    <scope>GENOME REANNOTATION</scope>
    <source>
        <strain>cv. Columbia</strain>
    </source>
</reference>
<reference key="5">
    <citation type="submission" date="2006-05" db="EMBL/GenBank/DDBJ databases">
        <title>SPIKE1 genomic sequence (exons 17-18).</title>
        <authorList>
            <person name="Basu D."/>
            <person name="Szymanski D.B."/>
        </authorList>
    </citation>
    <scope>NUCLEOTIDE SEQUENCE [GENOMIC DNA] OF 718-756</scope>
</reference>
<reference key="6">
    <citation type="journal article" date="2007" name="Development">
        <title>The role of Arabidopsis SCAR genes in ARP2-ARP3-dependent cell morphogenesis.</title>
        <authorList>
            <person name="Uhrig J.F."/>
            <person name="Mutondo M."/>
            <person name="Zimmermann I."/>
            <person name="Deeks M.J."/>
            <person name="Machesky L.M."/>
            <person name="Thomas P."/>
            <person name="Uhrig S."/>
            <person name="Rambke C."/>
            <person name="Hussey P.J."/>
            <person name="Huelskamp M."/>
        </authorList>
    </citation>
    <scope>SUBUNIT</scope>
    <scope>INTERACTION WITH ARAC4/ROP2; ARAC6/ROP5; ARAC9/ROP8; SCAR1; SCAR2; SCAR3; SCAR4; ABI1; ABI2; ABI3 AND ABI4</scope>
    <scope>HOMODIMERIZATION</scope>
</reference>
<reference key="7">
    <citation type="journal article" date="2008" name="J. Proteome Res.">
        <title>Site-specific phosphorylation profiling of Arabidopsis proteins by mass spectrometry and peptide chip analysis.</title>
        <authorList>
            <person name="de la Fuente van Bentem S."/>
            <person name="Anrather D."/>
            <person name="Dohnal I."/>
            <person name="Roitinger E."/>
            <person name="Csaszar E."/>
            <person name="Joore J."/>
            <person name="Buijnink J."/>
            <person name="Carreri A."/>
            <person name="Forzani C."/>
            <person name="Lorkovic Z.J."/>
            <person name="Barta A."/>
            <person name="Lecourieux D."/>
            <person name="Verhounig A."/>
            <person name="Jonak C."/>
            <person name="Hirt H."/>
        </authorList>
    </citation>
    <scope>PHOSPHORYLATION [LARGE SCALE ANALYSIS] AT SER-1051 AND SER-1095</scope>
    <scope>IDENTIFICATION BY MASS SPECTROMETRY [LARGE SCALE ANALYSIS]</scope>
    <source>
        <tissue>Root</tissue>
    </source>
</reference>
<reference key="8">
    <citation type="journal article" date="2008" name="Proc. Natl. Acad. Sci. U.S.A.">
        <title>A SPIKE1 signaling complex controls actin-dependent cell morphogenesis through the heteromeric WAVE and ARP2/3 complexes.</title>
        <authorList>
            <person name="Basu D."/>
            <person name="Le J."/>
            <person name="Zakharova T."/>
            <person name="Mallery E.L."/>
            <person name="Szymanski D.B."/>
        </authorList>
    </citation>
    <scope>FUNCTION</scope>
    <scope>SUBUNIT</scope>
    <scope>DISRUPTION PHENOTYPE</scope>
    <scope>INTERACTION WITH ARAC4/ROP2; ARAC1/ROP3; ARAC5/ROP4; ARAC6/ROP5 AND ARAC8/ROP10</scope>
    <source>
        <strain>cv. Columbia</strain>
    </source>
</reference>
<reference key="9">
    <citation type="journal article" date="2009" name="Plant Physiol.">
        <title>Large-scale Arabidopsis phosphoproteome profiling reveals novel chloroplast kinase substrates and phosphorylation networks.</title>
        <authorList>
            <person name="Reiland S."/>
            <person name="Messerli G."/>
            <person name="Baerenfaller K."/>
            <person name="Gerrits B."/>
            <person name="Endler A."/>
            <person name="Grossmann J."/>
            <person name="Gruissem W."/>
            <person name="Baginsky S."/>
        </authorList>
    </citation>
    <scope>PHOSPHORYLATION [LARGE SCALE ANALYSIS] AT SER-1051 AND THR-1079</scope>
    <scope>IDENTIFICATION BY MASS SPECTROMETRY [LARGE SCALE ANALYSIS]</scope>
</reference>
<reference key="10">
    <citation type="journal article" date="2010" name="Curr. Biol.">
        <title>SPIKE1 signals originate from and assemble specialized domains of the endoplasmic reticulum.</title>
        <authorList>
            <person name="Zhang C."/>
            <person name="Kotchoni S.O."/>
            <person name="Samuels A.L."/>
            <person name="Szymanski D.B."/>
        </authorList>
    </citation>
    <scope>FUNCTION</scope>
    <scope>DISRUPTION PHENOTYPE</scope>
    <scope>SUBCELLULAR LOCATION</scope>
</reference>
<reference key="11">
    <citation type="journal article" date="2012" name="Curr. Biol.">
        <title>A ROP GTPase-dependent auxin signaling pathway regulates the subcellular distribution of PIN2 in Arabidopsis roots.</title>
        <authorList>
            <person name="Lin D."/>
            <person name="Nagawa S."/>
            <person name="Chen J."/>
            <person name="Cao L."/>
            <person name="Chen X."/>
            <person name="Xu T."/>
            <person name="Li H."/>
            <person name="Dhonukshe P."/>
            <person name="Yamamuro C."/>
            <person name="Friml J."/>
            <person name="Scheres B."/>
            <person name="Fu Y."/>
            <person name="Yang Z."/>
        </authorList>
    </citation>
    <scope>FUNCTION</scope>
    <scope>DISRUPTION PHENOTYPE</scope>
    <scope>TISSUE SPECIFICITY</scope>
    <scope>INTERACTION WITH ARAC3/ROP6</scope>
</reference>
<reference key="12">
    <citation type="journal article" date="2012" name="Mol. Cell. Proteomics">
        <title>Comparative large-scale characterisation of plant vs. mammal proteins reveals similar and idiosyncratic N-alpha acetylation features.</title>
        <authorList>
            <person name="Bienvenut W.V."/>
            <person name="Sumpton D."/>
            <person name="Martinez A."/>
            <person name="Lilla S."/>
            <person name="Espagne C."/>
            <person name="Meinnel T."/>
            <person name="Giglione C."/>
        </authorList>
    </citation>
    <scope>ACETYLATION [LARGE SCALE ANALYSIS] AT MET-1</scope>
    <scope>IDENTIFICATION BY MASS SPECTROMETRY [LARGE SCALE ANALYSIS]</scope>
</reference>
<reference key="13">
    <citation type="journal article" date="2019" name="Int. J. Mol. Sci.">
        <title>Cortical microtubule organization during petal morphogenesis in Arabidopsis.</title>
        <authorList>
            <person name="Yang Y."/>
            <person name="Huang W."/>
            <person name="Wu E."/>
            <person name="Lin C."/>
            <person name="Chen B."/>
            <person name="Lin D."/>
        </authorList>
    </citation>
    <scope>FUNCTION</scope>
    <scope>DISRUPTION PHENOTYPE</scope>
    <scope>REVIEW ON ANISOTROPIC PETAL GROWTH</scope>
</reference>
<comment type="function">
    <text evidence="6 8 9 10 11">Guanine nucleotide exchange factor (GEF) for Rho and Rac. GEF proteins activate small GTPases by exchanging bound GDP for free GTP. Controls actin polymerization via the two heteromeric complexes WAVE and actin-related protein (ARP) 2/3 (PubMed:18308939). Involved in cytoskeletal reorganization required for cell shape (e.g. trichome and cotyledon) control and tissue development (PubMed:11826302). Prevents cortical microtubules organization into parallel arrays oriented perpendicular to the axis of cell elongation to limit anisotropic cell growth during petal development, probably by triggering ARAC4/ROP2 and ARAC3/ROP6 activity (PubMed:31623377). Promotes polarized growth and cell-cell adhesion in the leaf epidermis probably by promoting the formation of endoplasmic reticulum (ER) exit site (ERES) and/or trafficking between the ER and Golgi (PubMed:21109438). Triggers ARAC3/ROP6 activation required for auxin-mediated inhibition of PIN2 internalization during gravitropic responses (, PubMed:22683260).</text>
</comment>
<comment type="subunit">
    <text evidence="7 8 10">Homodimer. Component of SCAR/WAVE and ARP2/3 complexes. Interacts directly with ARAC4/ROP2, ARAC1/ROP3, ARAC5/ROP4, ARAC6/ROP5, ARAC8/ROP10, ARAC9/ROP8, SCAR1, SCAR2, SCAR3, SCAR4, ABI1, ABI2, ABI3 and ABI4 (PubMed:17267444, PubMed:18308939). Binds to the inactive GDP-bound form of ARAC3/ROP6 (PubMed:22683260).</text>
</comment>
<comment type="interaction">
    <interactant intactId="EBI-1547917">
        <id>Q8SAB7</id>
    </interactant>
    <interactant intactId="EBI-1548187">
        <id>Q38919</id>
        <label>ARAC4</label>
    </interactant>
    <organismsDiffer>false</organismsDiffer>
    <experiments>3</experiments>
</comment>
<comment type="interaction">
    <interactant intactId="EBI-1547917">
        <id>Q8SAB7</id>
    </interactant>
    <interactant intactId="EBI-1548024">
        <id>Q9SBJ6</id>
        <label>ARAC6</label>
    </interactant>
    <organismsDiffer>false</organismsDiffer>
    <experiments>2</experiments>
</comment>
<comment type="interaction">
    <interactant intactId="EBI-1547917">
        <id>Q8SAB7</id>
    </interactant>
    <interactant intactId="EBI-1547795">
        <id>Q5XPJ9</id>
        <label>SCAR2</label>
    </interactant>
    <organismsDiffer>false</organismsDiffer>
    <experiments>3</experiments>
</comment>
<comment type="subcellular location">
    <subcellularLocation>
        <location evidence="1">Cytoplasm</location>
    </subcellularLocation>
    <subcellularLocation>
        <location>Endoplasmic reticulum membrane</location>
        <topology evidence="9">Peripheral membrane protein</topology>
    </subcellularLocation>
    <subcellularLocation>
        <location evidence="9">Nucleus</location>
    </subcellularLocation>
    <text evidence="9">Accumulates at, and promotes the formation of, a specialized domain of the endoplasmic reticulum termed the ER exit site (ERES).</text>
</comment>
<comment type="tissue specificity">
    <text evidence="6 10">Expressed ubiquitously, in roots and aerial organs.</text>
</comment>
<comment type="domain">
    <text evidence="2">The DOCKER domain may mediate some GEF activity.</text>
</comment>
<comment type="disruption phenotype">
    <text evidence="6 8 9 10 11">Dwarf in spk1-1 and spk1-5 (PubMed:22683260). Seedling lethal with trichome, cotyledon, and leaf-shape defects due to a misregulation of laterally clustered foci of microtubules and polarized growth in epidermal cells. Sporophytic sterility. Trichomes show a reduced branch number and an irregular swelling along the stalk and branches (PubMed:11826302, PubMed:18308939). Long and narrow petals, as well as increased anisotropic cell expansion of petal epidermis during flower development, as a result of increased microtubule ordering in petal abaxial epidermal cells (PubMed:31623377). Enlarged endoplasmic reticulum (ER) cisternae and constitutively activated ER stress response (PubMed:21109438). Increased lateral root density and retarded gravitropic responses associated with PIN2 internalization. In spk1-4, enhanced cell shape changes induced by ROP6 overexpression, and reduced active ROP6 (GTP-bound) levels (PubMed:22683260).</text>
</comment>
<comment type="similarity">
    <text evidence="3">Belongs to the DOCK family.</text>
</comment>
<comment type="sequence caution" evidence="13">
    <conflict type="erroneous gene model prediction">
        <sequence resource="EMBL-CDS" id="CAB10411"/>
    </conflict>
</comment>
<comment type="sequence caution" evidence="13">
    <conflict type="erroneous gene model prediction">
        <sequence resource="EMBL-CDS" id="CAB78676"/>
    </conflict>
</comment>
<feature type="chain" id="PRO_0000432532" description="Guanine nucleotide exchange factor SPIKE 1">
    <location>
        <begin position="1"/>
        <end position="1830"/>
    </location>
</feature>
<feature type="domain" description="C2 DOCK-type" evidence="3">
    <location>
        <begin position="463"/>
        <end position="622"/>
    </location>
</feature>
<feature type="domain" description="DOCKER" evidence="4">
    <location>
        <begin position="1379"/>
        <end position="1828"/>
    </location>
</feature>
<feature type="region of interest" description="Disordered" evidence="5">
    <location>
        <begin position="285"/>
        <end position="304"/>
    </location>
</feature>
<feature type="compositionally biased region" description="Low complexity" evidence="5">
    <location>
        <begin position="289"/>
        <end position="304"/>
    </location>
</feature>
<feature type="modified residue" description="N-acetylmethionine" evidence="20">
    <location>
        <position position="1"/>
    </location>
</feature>
<feature type="modified residue" description="Phosphoserine" evidence="18 19">
    <location>
        <position position="1051"/>
    </location>
</feature>
<feature type="modified residue" description="Phosphothreonine" evidence="19">
    <location>
        <position position="1079"/>
    </location>
</feature>
<feature type="modified residue" description="Phosphoserine" evidence="18">
    <location>
        <position position="1095"/>
    </location>
</feature>
<keyword id="KW-0007">Acetylation</keyword>
<keyword id="KW-0927">Auxin signaling pathway</keyword>
<keyword id="KW-0963">Cytoplasm</keyword>
<keyword id="KW-0217">Developmental protein</keyword>
<keyword id="KW-0256">Endoplasmic reticulum</keyword>
<keyword id="KW-0344">Guanine-nucleotide releasing factor</keyword>
<keyword id="KW-0472">Membrane</keyword>
<keyword id="KW-0539">Nucleus</keyword>
<keyword id="KW-0597">Phosphoprotein</keyword>
<keyword id="KW-1185">Reference proteome</keyword>
<evidence type="ECO:0000250" key="1">
    <source>
        <dbReference type="UniProtKB" id="B2RY04"/>
    </source>
</evidence>
<evidence type="ECO:0000250" key="2">
    <source>
        <dbReference type="UniProtKB" id="Q14185"/>
    </source>
</evidence>
<evidence type="ECO:0000255" key="3">
    <source>
        <dbReference type="PROSITE-ProRule" id="PRU00983"/>
    </source>
</evidence>
<evidence type="ECO:0000255" key="4">
    <source>
        <dbReference type="PROSITE-ProRule" id="PRU00984"/>
    </source>
</evidence>
<evidence type="ECO:0000256" key="5">
    <source>
        <dbReference type="SAM" id="MobiDB-lite"/>
    </source>
</evidence>
<evidence type="ECO:0000269" key="6">
    <source>
    </source>
</evidence>
<evidence type="ECO:0000269" key="7">
    <source>
    </source>
</evidence>
<evidence type="ECO:0000269" key="8">
    <source>
    </source>
</evidence>
<evidence type="ECO:0000269" key="9">
    <source>
    </source>
</evidence>
<evidence type="ECO:0000269" key="10">
    <source>
    </source>
</evidence>
<evidence type="ECO:0000269" key="11">
    <source>
    </source>
</evidence>
<evidence type="ECO:0000303" key="12">
    <source>
    </source>
</evidence>
<evidence type="ECO:0000305" key="13"/>
<evidence type="ECO:0000312" key="14">
    <source>
        <dbReference type="Araport" id="AT4G16340"/>
    </source>
</evidence>
<evidence type="ECO:0000312" key="15">
    <source>
        <dbReference type="EMBL" id="AAL74193.1"/>
    </source>
</evidence>
<evidence type="ECO:0000312" key="16">
    <source>
        <dbReference type="EMBL" id="CAB10411.1"/>
    </source>
</evidence>
<evidence type="ECO:0000312" key="17">
    <source>
        <dbReference type="EMBL" id="CAB78676.1"/>
    </source>
</evidence>
<evidence type="ECO:0007744" key="18">
    <source>
    </source>
</evidence>
<evidence type="ECO:0007744" key="19">
    <source>
    </source>
</evidence>
<evidence type="ECO:0007744" key="20">
    <source>
    </source>
</evidence>
<accession>Q8SAB7</accession>
<accession>O23479</accession>
<accession>Q152R9</accession>